<feature type="signal peptide" evidence="2">
    <location>
        <begin position="1"/>
        <end position="17"/>
    </location>
</feature>
<feature type="propeptide" id="PRO_0000407134" evidence="1">
    <location>
        <begin position="18"/>
        <end position="183"/>
    </location>
</feature>
<feature type="chain" id="PRO_0000407135" description="Neutral protease 2 homolog MGYG_02351">
    <location>
        <begin position="184"/>
        <end position="358"/>
    </location>
</feature>
<feature type="active site" evidence="3">
    <location>
        <position position="310"/>
    </location>
</feature>
<feature type="binding site" evidence="3">
    <location>
        <position position="309"/>
    </location>
    <ligand>
        <name>Zn(2+)</name>
        <dbReference type="ChEBI" id="CHEBI:29105"/>
        <note>catalytic</note>
    </ligand>
</feature>
<feature type="binding site" evidence="3">
    <location>
        <position position="313"/>
    </location>
    <ligand>
        <name>Zn(2+)</name>
        <dbReference type="ChEBI" id="CHEBI:29105"/>
        <note>catalytic</note>
    </ligand>
</feature>
<feature type="binding site" evidence="3">
    <location>
        <position position="324"/>
    </location>
    <ligand>
        <name>Zn(2+)</name>
        <dbReference type="ChEBI" id="CHEBI:29105"/>
        <note>catalytic</note>
    </ligand>
</feature>
<feature type="disulfide bond" evidence="1">
    <location>
        <begin position="191"/>
        <end position="260"/>
    </location>
</feature>
<feature type="disulfide bond" evidence="1">
    <location>
        <begin position="267"/>
        <end position="285"/>
    </location>
</feature>
<comment type="function">
    <text evidence="1">Secreted metalloproteinase that allows assimilation of proteinaceous substrates. Shows high activities on basic nuclear substrates such as histone and protamine. May be involved in virulence (By similarity).</text>
</comment>
<comment type="catalytic activity">
    <reaction>
        <text>Preferential cleavage of bonds with hydrophobic residues in P1'. Also 3-Asn-|-Gln-4 and 8-Gly-|-Ser-9 bonds in insulin B chain.</text>
        <dbReference type="EC" id="3.4.24.39"/>
    </reaction>
</comment>
<comment type="cofactor">
    <cofactor evidence="1">
        <name>Zn(2+)</name>
        <dbReference type="ChEBI" id="CHEBI:29105"/>
    </cofactor>
    <text evidence="1">Binds 1 zinc ion per subunit.</text>
</comment>
<comment type="subcellular location">
    <subcellularLocation>
        <location evidence="1">Secreted</location>
    </subcellularLocation>
</comment>
<comment type="similarity">
    <text evidence="4">Belongs to the peptidase M35 family.</text>
</comment>
<evidence type="ECO:0000250" key="1"/>
<evidence type="ECO:0000255" key="2"/>
<evidence type="ECO:0000255" key="3">
    <source>
        <dbReference type="PROSITE-ProRule" id="PRU10095"/>
    </source>
</evidence>
<evidence type="ECO:0000305" key="4"/>
<sequence length="358" mass="38654">MQFVALLAALGAPLALAASIPAAHNNSSIIDVKLAATGNSMIKAIITNNGDRTLNLLKFNTIMDEHPTRKVKVYQDGAEVQFTGMLPRYKMSDLTPDFFVNLGPKASVEHSFDLAATHDLSRGGKITVSANGVVPTAEENETTITGHTHYESNELTMDVDGKEAAAVEQSMGGDSPAGVIDKRSNIVTSSCRGNQLQMLKTALANSARLSKAAASAAQRNPRKFQEYFKTTDSSTVQKVVSRFMSVARESTSTGKTTYYCNDTRDGCKPGVLAYTLPSKNQVFNCPSYYKLPALNNRCHGQDMATTTLHELTHNPAVVTPFCEDLGYGYDRVSRLPASKAVQNADTYSLFANAVYLGC</sequence>
<protein>
    <recommendedName>
        <fullName>Neutral protease 2 homolog MGYG_02351</fullName>
        <ecNumber>3.4.24.39</ecNumber>
    </recommendedName>
    <alternativeName>
        <fullName>Deuterolysin MGYG_02351</fullName>
    </alternativeName>
</protein>
<keyword id="KW-0165">Cleavage on pair of basic residues</keyword>
<keyword id="KW-1015">Disulfide bond</keyword>
<keyword id="KW-0378">Hydrolase</keyword>
<keyword id="KW-0479">Metal-binding</keyword>
<keyword id="KW-0482">Metalloprotease</keyword>
<keyword id="KW-0645">Protease</keyword>
<keyword id="KW-1185">Reference proteome</keyword>
<keyword id="KW-0964">Secreted</keyword>
<keyword id="KW-0732">Signal</keyword>
<keyword id="KW-0843">Virulence</keyword>
<keyword id="KW-0862">Zinc</keyword>
<keyword id="KW-0865">Zymogen</keyword>
<accession>E4UR63</accession>
<name>NPIIC_ARTGP</name>
<proteinExistence type="inferred from homology"/>
<gene>
    <name type="ORF">MGYG_02351</name>
</gene>
<organism>
    <name type="scientific">Arthroderma gypseum (strain ATCC MYA-4604 / CBS 118893)</name>
    <name type="common">Microsporum gypseum</name>
    <dbReference type="NCBI Taxonomy" id="535722"/>
    <lineage>
        <taxon>Eukaryota</taxon>
        <taxon>Fungi</taxon>
        <taxon>Dikarya</taxon>
        <taxon>Ascomycota</taxon>
        <taxon>Pezizomycotina</taxon>
        <taxon>Eurotiomycetes</taxon>
        <taxon>Eurotiomycetidae</taxon>
        <taxon>Onygenales</taxon>
        <taxon>Arthrodermataceae</taxon>
        <taxon>Nannizzia</taxon>
    </lineage>
</organism>
<dbReference type="EC" id="3.4.24.39"/>
<dbReference type="EMBL" id="DS989823">
    <property type="protein sequence ID" value="EFQ99338.1"/>
    <property type="molecule type" value="Genomic_DNA"/>
</dbReference>
<dbReference type="RefSeq" id="XP_003174821.1">
    <property type="nucleotide sequence ID" value="XM_003174773.1"/>
</dbReference>
<dbReference type="SMR" id="E4UR63"/>
<dbReference type="STRING" id="535722.E4UR63"/>
<dbReference type="MEROPS" id="M35.001"/>
<dbReference type="GeneID" id="10030122"/>
<dbReference type="VEuPathDB" id="FungiDB:MGYG_02351"/>
<dbReference type="eggNOG" id="ENOG502SGF5">
    <property type="taxonomic scope" value="Eukaryota"/>
</dbReference>
<dbReference type="HOGENOM" id="CLU_039313_1_0_1"/>
<dbReference type="InParanoid" id="E4UR63"/>
<dbReference type="OMA" id="NHSMIDV"/>
<dbReference type="OrthoDB" id="412874at2759"/>
<dbReference type="Proteomes" id="UP000002669">
    <property type="component" value="Unassembled WGS sequence"/>
</dbReference>
<dbReference type="GO" id="GO:0005576">
    <property type="term" value="C:extracellular region"/>
    <property type="evidence" value="ECO:0007669"/>
    <property type="project" value="UniProtKB-SubCell"/>
</dbReference>
<dbReference type="GO" id="GO:0046872">
    <property type="term" value="F:metal ion binding"/>
    <property type="evidence" value="ECO:0007669"/>
    <property type="project" value="UniProtKB-KW"/>
</dbReference>
<dbReference type="GO" id="GO:0004222">
    <property type="term" value="F:metalloendopeptidase activity"/>
    <property type="evidence" value="ECO:0007669"/>
    <property type="project" value="InterPro"/>
</dbReference>
<dbReference type="GO" id="GO:0006508">
    <property type="term" value="P:proteolysis"/>
    <property type="evidence" value="ECO:0007669"/>
    <property type="project" value="UniProtKB-KW"/>
</dbReference>
<dbReference type="CDD" id="cd11008">
    <property type="entry name" value="M35_deuterolysin_like"/>
    <property type="match status" value="1"/>
</dbReference>
<dbReference type="Gene3D" id="2.60.40.2970">
    <property type="match status" value="1"/>
</dbReference>
<dbReference type="Gene3D" id="3.40.390.10">
    <property type="entry name" value="Collagenase (Catalytic Domain)"/>
    <property type="match status" value="1"/>
</dbReference>
<dbReference type="InterPro" id="IPR050414">
    <property type="entry name" value="Fungal_M35_metalloproteases"/>
</dbReference>
<dbReference type="InterPro" id="IPR024079">
    <property type="entry name" value="MetalloPept_cat_dom_sf"/>
</dbReference>
<dbReference type="InterPro" id="IPR001384">
    <property type="entry name" value="Peptidase_M35"/>
</dbReference>
<dbReference type="PANTHER" id="PTHR37016">
    <property type="match status" value="1"/>
</dbReference>
<dbReference type="PANTHER" id="PTHR37016:SF7">
    <property type="entry name" value="NEUTRAL PROTEASE 2"/>
    <property type="match status" value="1"/>
</dbReference>
<dbReference type="Pfam" id="PF02102">
    <property type="entry name" value="Peptidase_M35"/>
    <property type="match status" value="1"/>
</dbReference>
<dbReference type="PRINTS" id="PR00768">
    <property type="entry name" value="DEUTEROLYSIN"/>
</dbReference>
<dbReference type="SUPFAM" id="SSF55486">
    <property type="entry name" value="Metalloproteases ('zincins'), catalytic domain"/>
    <property type="match status" value="1"/>
</dbReference>
<dbReference type="PROSITE" id="PS00142">
    <property type="entry name" value="ZINC_PROTEASE"/>
    <property type="match status" value="1"/>
</dbReference>
<reference key="1">
    <citation type="journal article" date="2012" name="MBio">
        <title>Comparative genome analysis of Trichophyton rubrum and related dermatophytes reveals candidate genes involved in infection.</title>
        <authorList>
            <person name="Martinez D.A."/>
            <person name="Oliver B.G."/>
            <person name="Graeser Y."/>
            <person name="Goldberg J.M."/>
            <person name="Li W."/>
            <person name="Martinez-Rossi N.M."/>
            <person name="Monod M."/>
            <person name="Shelest E."/>
            <person name="Barton R.C."/>
            <person name="Birch E."/>
            <person name="Brakhage A.A."/>
            <person name="Chen Z."/>
            <person name="Gurr S.J."/>
            <person name="Heiman D."/>
            <person name="Heitman J."/>
            <person name="Kosti I."/>
            <person name="Rossi A."/>
            <person name="Saif S."/>
            <person name="Samalova M."/>
            <person name="Saunders C.W."/>
            <person name="Shea T."/>
            <person name="Summerbell R.C."/>
            <person name="Xu J."/>
            <person name="Young S."/>
            <person name="Zeng Q."/>
            <person name="Birren B.W."/>
            <person name="Cuomo C.A."/>
            <person name="White T.C."/>
        </authorList>
    </citation>
    <scope>NUCLEOTIDE SEQUENCE [LARGE SCALE GENOMIC DNA]</scope>
    <source>
        <strain>ATCC MYA-4604 / CBS 118893</strain>
    </source>
</reference>